<gene>
    <name evidence="1" type="primary">rpl32e</name>
    <name type="ordered locus">Mevan_0727</name>
</gene>
<reference key="1">
    <citation type="submission" date="2007-06" db="EMBL/GenBank/DDBJ databases">
        <title>Complete sequence of Methanococcus vannielii SB.</title>
        <authorList>
            <consortium name="US DOE Joint Genome Institute"/>
            <person name="Copeland A."/>
            <person name="Lucas S."/>
            <person name="Lapidus A."/>
            <person name="Barry K."/>
            <person name="Glavina del Rio T."/>
            <person name="Dalin E."/>
            <person name="Tice H."/>
            <person name="Pitluck S."/>
            <person name="Chain P."/>
            <person name="Malfatti S."/>
            <person name="Shin M."/>
            <person name="Vergez L."/>
            <person name="Schmutz J."/>
            <person name="Larimer F."/>
            <person name="Land M."/>
            <person name="Hauser L."/>
            <person name="Kyrpides N."/>
            <person name="Anderson I."/>
            <person name="Sieprawska-Lupa M."/>
            <person name="Whitman W.B."/>
            <person name="Richardson P."/>
        </authorList>
    </citation>
    <scope>NUCLEOTIDE SEQUENCE [LARGE SCALE GENOMIC DNA]</scope>
    <source>
        <strain>ATCC 35089 / DSM 1224 / JCM 13029 / OCM 148 / SB</strain>
    </source>
</reference>
<proteinExistence type="inferred from homology"/>
<protein>
    <recommendedName>
        <fullName evidence="1">Large ribosomal subunit protein eL32</fullName>
    </recommendedName>
    <alternativeName>
        <fullName evidence="2">50S ribosomal protein L32e</fullName>
    </alternativeName>
</protein>
<name>RL32_METVS</name>
<dbReference type="EMBL" id="CP000742">
    <property type="protein sequence ID" value="ABR54633.1"/>
    <property type="molecule type" value="Genomic_DNA"/>
</dbReference>
<dbReference type="RefSeq" id="WP_011972535.1">
    <property type="nucleotide sequence ID" value="NC_009634.1"/>
</dbReference>
<dbReference type="SMR" id="A6UQ61"/>
<dbReference type="STRING" id="406327.Mevan_0727"/>
<dbReference type="GeneID" id="5325992"/>
<dbReference type="KEGG" id="mvn:Mevan_0727"/>
<dbReference type="eggNOG" id="arCOG00781">
    <property type="taxonomic scope" value="Archaea"/>
</dbReference>
<dbReference type="HOGENOM" id="CLU_071479_3_1_2"/>
<dbReference type="OrthoDB" id="372100at2157"/>
<dbReference type="Proteomes" id="UP000001107">
    <property type="component" value="Chromosome"/>
</dbReference>
<dbReference type="GO" id="GO:0022625">
    <property type="term" value="C:cytosolic large ribosomal subunit"/>
    <property type="evidence" value="ECO:0007669"/>
    <property type="project" value="TreeGrafter"/>
</dbReference>
<dbReference type="GO" id="GO:0003735">
    <property type="term" value="F:structural constituent of ribosome"/>
    <property type="evidence" value="ECO:0007669"/>
    <property type="project" value="InterPro"/>
</dbReference>
<dbReference type="GO" id="GO:0006412">
    <property type="term" value="P:translation"/>
    <property type="evidence" value="ECO:0007669"/>
    <property type="project" value="UniProtKB-UniRule"/>
</dbReference>
<dbReference type="CDD" id="cd00513">
    <property type="entry name" value="Ribosomal_L32_L32e"/>
    <property type="match status" value="1"/>
</dbReference>
<dbReference type="HAMAP" id="MF_00810">
    <property type="entry name" value="Ribosomal_eL32"/>
    <property type="match status" value="1"/>
</dbReference>
<dbReference type="InterPro" id="IPR001515">
    <property type="entry name" value="Ribosomal_eL32"/>
</dbReference>
<dbReference type="InterPro" id="IPR023654">
    <property type="entry name" value="Ribosomal_eL32_arc"/>
</dbReference>
<dbReference type="InterPro" id="IPR018263">
    <property type="entry name" value="Ribosomal_eL32_CS"/>
</dbReference>
<dbReference type="InterPro" id="IPR036351">
    <property type="entry name" value="Ribosomal_eL32_sf"/>
</dbReference>
<dbReference type="NCBIfam" id="NF006332">
    <property type="entry name" value="PRK08562.1"/>
    <property type="match status" value="1"/>
</dbReference>
<dbReference type="PANTHER" id="PTHR23413">
    <property type="entry name" value="60S RIBOSOMAL PROTEIN L32 AND DNA-DIRECTED RNA POLYMERASE II, SUBUNIT N"/>
    <property type="match status" value="1"/>
</dbReference>
<dbReference type="PANTHER" id="PTHR23413:SF1">
    <property type="entry name" value="RIBOSOMAL PROTEIN L32"/>
    <property type="match status" value="1"/>
</dbReference>
<dbReference type="Pfam" id="PF01655">
    <property type="entry name" value="Ribosomal_L32e"/>
    <property type="match status" value="1"/>
</dbReference>
<dbReference type="SMART" id="SM01393">
    <property type="entry name" value="Ribosomal_L32e"/>
    <property type="match status" value="1"/>
</dbReference>
<dbReference type="SUPFAM" id="SSF52042">
    <property type="entry name" value="Ribosomal protein L32e"/>
    <property type="match status" value="1"/>
</dbReference>
<dbReference type="PROSITE" id="PS00580">
    <property type="entry name" value="RIBOSOMAL_L32E"/>
    <property type="match status" value="1"/>
</dbReference>
<comment type="similarity">
    <text evidence="1">Belongs to the eukaryotic ribosomal protein eL32 family.</text>
</comment>
<sequence length="135" mass="15524">MSEFKRLMRLKLKMKQKRPEFKRQDSHRFQRIGTMWRRPTGHHSGQRIQVTYRLSPVKIGFRGPALVRGLHPSGLEDIIVNNVKQLAALNPKTQGARIASAVGTRKRIEIVKKANELGIRVFNVSKQKQGEFLSL</sequence>
<organism>
    <name type="scientific">Methanococcus vannielii (strain ATCC 35089 / DSM 1224 / JCM 13029 / OCM 148 / SB)</name>
    <dbReference type="NCBI Taxonomy" id="406327"/>
    <lineage>
        <taxon>Archaea</taxon>
        <taxon>Methanobacteriati</taxon>
        <taxon>Methanobacteriota</taxon>
        <taxon>Methanomada group</taxon>
        <taxon>Methanococci</taxon>
        <taxon>Methanococcales</taxon>
        <taxon>Methanococcaceae</taxon>
        <taxon>Methanococcus</taxon>
    </lineage>
</organism>
<evidence type="ECO:0000255" key="1">
    <source>
        <dbReference type="HAMAP-Rule" id="MF_00810"/>
    </source>
</evidence>
<evidence type="ECO:0000305" key="2"/>
<keyword id="KW-0687">Ribonucleoprotein</keyword>
<keyword id="KW-0689">Ribosomal protein</keyword>
<feature type="chain" id="PRO_1000047109" description="Large ribosomal subunit protein eL32">
    <location>
        <begin position="1"/>
        <end position="135"/>
    </location>
</feature>
<accession>A6UQ61</accession>